<accession>P50781</accession>
<keyword id="KW-0010">Activator</keyword>
<keyword id="KW-0238">DNA-binding</keyword>
<keyword id="KW-0244">Early protein</keyword>
<keyword id="KW-1078">G1/S host cell cycle checkpoint dysregulation by virus</keyword>
<keyword id="KW-1035">Host cytoplasm</keyword>
<keyword id="KW-1048">Host nucleus</keyword>
<keyword id="KW-0945">Host-virus interaction</keyword>
<keyword id="KW-1090">Inhibition of host innate immune response by virus</keyword>
<keyword id="KW-1114">Inhibition of host interferon signaling pathway by virus</keyword>
<keyword id="KW-0922">Interferon antiviral system evasion</keyword>
<keyword id="KW-0479">Metal-binding</keyword>
<keyword id="KW-1121">Modulation of host cell cycle by virus</keyword>
<keyword id="KW-0553">Oncogene</keyword>
<keyword id="KW-1185">Reference proteome</keyword>
<keyword id="KW-0804">Transcription</keyword>
<keyword id="KW-0805">Transcription regulation</keyword>
<keyword id="KW-0899">Viral immunoevasion</keyword>
<keyword id="KW-0862">Zinc</keyword>
<keyword id="KW-0863">Zinc-finger</keyword>
<name>VE7_HPV23</name>
<sequence length="97" mass="11048">MIGKQATLRDIVLEELVQPIDLHCHEELTEEVEEAVVEEEPEYTPYKIIVVCGGCETQLKLYVLATDFGIRSFQASLLENVKLVCPACREDIRNGRR</sequence>
<gene>
    <name evidence="1" type="primary">E7</name>
</gene>
<evidence type="ECO:0000255" key="1">
    <source>
        <dbReference type="HAMAP-Rule" id="MF_04004"/>
    </source>
</evidence>
<protein>
    <recommendedName>
        <fullName evidence="1">Protein E7</fullName>
    </recommendedName>
</protein>
<dbReference type="EMBL" id="U31781">
    <property type="protein sequence ID" value="AAA79409.1"/>
    <property type="molecule type" value="Genomic_DNA"/>
</dbReference>
<dbReference type="SMR" id="P50781"/>
<dbReference type="Proteomes" id="UP000009112">
    <property type="component" value="Segment"/>
</dbReference>
<dbReference type="GO" id="GO:0030430">
    <property type="term" value="C:host cell cytoplasm"/>
    <property type="evidence" value="ECO:0007669"/>
    <property type="project" value="UniProtKB-SubCell"/>
</dbReference>
<dbReference type="GO" id="GO:0042025">
    <property type="term" value="C:host cell nucleus"/>
    <property type="evidence" value="ECO:0007669"/>
    <property type="project" value="UniProtKB-SubCell"/>
</dbReference>
<dbReference type="GO" id="GO:0003677">
    <property type="term" value="F:DNA binding"/>
    <property type="evidence" value="ECO:0007669"/>
    <property type="project" value="UniProtKB-UniRule"/>
</dbReference>
<dbReference type="GO" id="GO:0003700">
    <property type="term" value="F:DNA-binding transcription factor activity"/>
    <property type="evidence" value="ECO:0007669"/>
    <property type="project" value="UniProtKB-UniRule"/>
</dbReference>
<dbReference type="GO" id="GO:0019904">
    <property type="term" value="F:protein domain specific binding"/>
    <property type="evidence" value="ECO:0007669"/>
    <property type="project" value="UniProtKB-UniRule"/>
</dbReference>
<dbReference type="GO" id="GO:0008270">
    <property type="term" value="F:zinc ion binding"/>
    <property type="evidence" value="ECO:0007669"/>
    <property type="project" value="UniProtKB-KW"/>
</dbReference>
<dbReference type="GO" id="GO:0006351">
    <property type="term" value="P:DNA-templated transcription"/>
    <property type="evidence" value="ECO:0007669"/>
    <property type="project" value="UniProtKB-UniRule"/>
</dbReference>
<dbReference type="GO" id="GO:0039645">
    <property type="term" value="P:symbiont-mediated perturbation of host cell cycle G1/S transition checkpoint"/>
    <property type="evidence" value="ECO:0007669"/>
    <property type="project" value="UniProtKB-UniRule"/>
</dbReference>
<dbReference type="GO" id="GO:0052170">
    <property type="term" value="P:symbiont-mediated suppression of host innate immune response"/>
    <property type="evidence" value="ECO:0007669"/>
    <property type="project" value="UniProtKB-KW"/>
</dbReference>
<dbReference type="GO" id="GO:0039502">
    <property type="term" value="P:symbiont-mediated suppression of host type I interferon-mediated signaling pathway"/>
    <property type="evidence" value="ECO:0007669"/>
    <property type="project" value="UniProtKB-UniRule"/>
</dbReference>
<dbReference type="Gene3D" id="3.30.160.330">
    <property type="match status" value="1"/>
</dbReference>
<dbReference type="HAMAP" id="MF_04004">
    <property type="entry name" value="PPV_E7"/>
    <property type="match status" value="1"/>
</dbReference>
<dbReference type="InterPro" id="IPR000148">
    <property type="entry name" value="Papilloma_E7"/>
</dbReference>
<dbReference type="Pfam" id="PF00527">
    <property type="entry name" value="E7"/>
    <property type="match status" value="1"/>
</dbReference>
<dbReference type="PIRSF" id="PIRSF003407">
    <property type="entry name" value="Papvi_E7"/>
    <property type="match status" value="1"/>
</dbReference>
<dbReference type="SUPFAM" id="SSF161234">
    <property type="entry name" value="E7 C-terminal domain-like"/>
    <property type="match status" value="1"/>
</dbReference>
<proteinExistence type="inferred from homology"/>
<feature type="chain" id="PRO_0000133421" description="Protein E7">
    <location>
        <begin position="1"/>
        <end position="97"/>
    </location>
</feature>
<feature type="zinc finger region" evidence="1">
    <location>
        <begin position="52"/>
        <end position="88"/>
    </location>
</feature>
<feature type="region of interest" description="E7 terminal domain" evidence="1">
    <location>
        <begin position="1"/>
        <end position="40"/>
    </location>
</feature>
<feature type="short sequence motif" description="LXCXE motif; interaction with host RB1 and TMEM173/STING" evidence="1">
    <location>
        <begin position="22"/>
        <end position="26"/>
    </location>
</feature>
<feature type="short sequence motif" description="Nuclear export signal" evidence="1">
    <location>
        <begin position="70"/>
        <end position="78"/>
    </location>
</feature>
<organism>
    <name type="scientific">Human papillomavirus 23</name>
    <dbReference type="NCBI Taxonomy" id="37955"/>
    <lineage>
        <taxon>Viruses</taxon>
        <taxon>Monodnaviria</taxon>
        <taxon>Shotokuvirae</taxon>
        <taxon>Cossaviricota</taxon>
        <taxon>Papovaviricetes</taxon>
        <taxon>Zurhausenvirales</taxon>
        <taxon>Papillomaviridae</taxon>
        <taxon>Firstpapillomavirinae</taxon>
        <taxon>Betapapillomavirus</taxon>
        <taxon>Betapapillomavirus 2</taxon>
    </lineage>
</organism>
<organismHost>
    <name type="scientific">Homo sapiens</name>
    <name type="common">Human</name>
    <dbReference type="NCBI Taxonomy" id="9606"/>
</organismHost>
<comment type="function">
    <text evidence="1">Plays a role in viral genome replication by driving entry of quiescent cells into the cell cycle. Stimulation of progression from G1 to S phase allows the virus to efficiently use the cellular DNA replicating machinery to achieve viral genome replication. E7 protein has both transforming and trans-activating activities. Induces the disassembly of the E2F1 transcription factor from RB1, with subsequent transcriptional activation of E2F1-regulated S-phase genes. Interferes with host histone deacetylation mediated by HDAC1 and HDAC2, leading to transcription activation. Also plays a role in the inhibition of both antiviral and antiproliferative functions of host interferon alpha. Interaction with host TMEM173/STING impairs the ability of TMEM173/STING to sense cytosolic DNA and promote the production of type I interferon (IFN-alpha and IFN-beta).</text>
</comment>
<comment type="subunit">
    <text evidence="1">Homodimer. Homooligomer. Interacts with host RB1; this interaction induces dissociation of RB1-E2F1 complex thereby disrupting RB1 activity. Interacts with host EP300; this interaction represses EP300 transcriptional activity. Interacts with protein E2; this interaction inhibits E7 oncogenic activity. Interacts with host TMEM173/STING; this interaction impairs the ability of TMEM173/STING to sense cytosolic DNA and promote the production of type I interferon (IFN-alpha and IFN-beta).</text>
</comment>
<comment type="subcellular location">
    <subcellularLocation>
        <location evidence="1">Host cytoplasm</location>
    </subcellularLocation>
    <subcellularLocation>
        <location evidence="1">Host nucleus</location>
    </subcellularLocation>
    <text evidence="1">Predominantly found in the host nucleus.</text>
</comment>
<comment type="domain">
    <text evidence="1">The E7 terminal domain is an intrinsically disordered domain, whose flexibility and conformational transitions confer target adaptability to the oncoprotein. It allows adaptation to a variety of protein targets and exposes the PEST degradation sequence that regulates its turnover in the cell.</text>
</comment>
<comment type="PTM">
    <text evidence="1">Highly phosphorylated.</text>
</comment>
<comment type="similarity">
    <text evidence="1">Belongs to the papillomaviridae E7 protein family.</text>
</comment>
<reference key="1">
    <citation type="submission" date="1995-10" db="EMBL/GenBank/DDBJ databases">
        <authorList>
            <person name="Delius H."/>
        </authorList>
    </citation>
    <scope>NUCLEOTIDE SEQUENCE [GENOMIC DNA]</scope>
</reference>
<reference key="2">
    <citation type="journal article" date="2002" name="Rev. Med. Virol.">
        <title>Interactions of SV40 large T antigen and other viral proteins with retinoblastoma tumour suppressor.</title>
        <authorList>
            <person name="Lee C."/>
            <person name="Cho Y."/>
        </authorList>
    </citation>
    <scope>REVIEW</scope>
</reference>